<sequence length="1028" mass="113146">MEMSSKRKHSSGPISLRSTKHLRSDTAASPQPLTPDDQTLGEEAVYVLDNEDEDLSHVLPLAPAAAAQTDSPEWQATIETVVKSVVSIHFCQTASFDTDLSMSSQATGFVVDAEKGYILTNRHVVCAGPFWGYCIFDNHEECDVRPVYRDPVHDFGILKFDPAAIKYMPVTELKLSPDAAKVGVEIRVVGNDAGEKLSILSGVISRLDRNAPEYGEGYSDFNTNYIQAAAAASGGSSGSPVVNIDGHAIALQAGGRADGAATDYFLPLDRPLRALECIRKGVPVTRGTIQTQWIIKPFDECRRLGLSPEWEAAVRKGSPKETGMLVAEIVLPEGPGDGKLQEGDVLIKVNGELLTQFVKLDAILDSSVGKDVHLLVQRGGEDLEVSCTVGDLHAITPARYVTVAGATFHDLSYQQARLYAIACKGVYVCEAAGSFKLENTFSGWIVDTVDKRPTKNLDEFIEVMKTIPDRARVALSYRHIRDLHTRGTSIVHIDRHWHPHIREAIRNDETGLWDFTNIADPLPAEPPVPRKADFIQLDGANHPAAADIVRSFVRVSCTMPVKLDGYPQARKAGFGLVVDAEAGLVLVSRAIVPFDLCDINVTVADSIIVMAKVIFLHPLQNYTIIQYDPSLVQAPVKTARLSTNYIKQGADTIFVGFNQNFRIVVAKTAVTDITTVAIPPNAAAPRYRALNLDAITVDTGLSSQCSNGVLIGEDGIVQALWLNYLGERTASSHKDVEYHLGLATPSLLPIINQIESGSLPKLRIMDMESYVIQMSQARIMGVSEEWIEKVAIANPARHELFMVRKVDCASPLTEDTHQLEEGDIILTLNDKLITRVSEFDIMYHHETLDALIVRNGQEMRVNIKTVPTEDLETDRALIFCGAVLQKPHHAVRQQISKLHSEVYVSARSRGSPAYQYGLSPTNFITAVNGVKTPDLDSFIKQVNVIPNNTYFRLRAVTFDNVPWVVTMKKNDHYFPMSEYIKDPSAPEGWRSISHDKELLRLDSDNLNADAMDEGRDDGISDMEPDGEK</sequence>
<organism>
    <name type="scientific">Ajellomyces capsulatus (strain NAm1 / WU24)</name>
    <name type="common">Darling's disease fungus</name>
    <name type="synonym">Histoplasma capsulatum</name>
    <dbReference type="NCBI Taxonomy" id="2059318"/>
    <lineage>
        <taxon>Eukaryota</taxon>
        <taxon>Fungi</taxon>
        <taxon>Dikarya</taxon>
        <taxon>Ascomycota</taxon>
        <taxon>Pezizomycotina</taxon>
        <taxon>Eurotiomycetes</taxon>
        <taxon>Eurotiomycetidae</taxon>
        <taxon>Onygenales</taxon>
        <taxon>Ajellomycetaceae</taxon>
        <taxon>Histoplasma</taxon>
    </lineage>
</organism>
<protein>
    <recommendedName>
        <fullName>Pro-apoptotic serine protease NMA111</fullName>
        <ecNumber>3.4.21.-</ecNumber>
    </recommendedName>
</protein>
<dbReference type="EC" id="3.4.21.-"/>
<dbReference type="EMBL" id="CH476666">
    <property type="protein sequence ID" value="EDN04997.1"/>
    <property type="status" value="ALT_INIT"/>
    <property type="molecule type" value="Genomic_DNA"/>
</dbReference>
<dbReference type="SMR" id="A6RG85"/>
<dbReference type="STRING" id="339724.A6RG85"/>
<dbReference type="KEGG" id="aje:HCAG_08651"/>
<dbReference type="HOGENOM" id="CLU_003212_0_0_1"/>
<dbReference type="OrthoDB" id="1865at299071"/>
<dbReference type="Proteomes" id="UP000009297">
    <property type="component" value="Unassembled WGS sequence"/>
</dbReference>
<dbReference type="GO" id="GO:0005634">
    <property type="term" value="C:nucleus"/>
    <property type="evidence" value="ECO:0007669"/>
    <property type="project" value="UniProtKB-SubCell"/>
</dbReference>
<dbReference type="GO" id="GO:0004252">
    <property type="term" value="F:serine-type endopeptidase activity"/>
    <property type="evidence" value="ECO:0007669"/>
    <property type="project" value="InterPro"/>
</dbReference>
<dbReference type="GO" id="GO:0006915">
    <property type="term" value="P:apoptotic process"/>
    <property type="evidence" value="ECO:0007669"/>
    <property type="project" value="UniProtKB-KW"/>
</dbReference>
<dbReference type="GO" id="GO:0006508">
    <property type="term" value="P:proteolysis"/>
    <property type="evidence" value="ECO:0007669"/>
    <property type="project" value="UniProtKB-KW"/>
</dbReference>
<dbReference type="CDD" id="cd06786">
    <property type="entry name" value="cpPDZ1_ScNma111-like"/>
    <property type="match status" value="1"/>
</dbReference>
<dbReference type="CDD" id="cd10827">
    <property type="entry name" value="cpPDZ3_ScNma111-like"/>
    <property type="match status" value="1"/>
</dbReference>
<dbReference type="CDD" id="cd06719">
    <property type="entry name" value="PDZ2-4_Nma111p-like"/>
    <property type="match status" value="1"/>
</dbReference>
<dbReference type="Gene3D" id="2.30.42.10">
    <property type="match status" value="1"/>
</dbReference>
<dbReference type="Gene3D" id="2.40.10.120">
    <property type="match status" value="1"/>
</dbReference>
<dbReference type="InterPro" id="IPR001478">
    <property type="entry name" value="PDZ"/>
</dbReference>
<dbReference type="InterPro" id="IPR025926">
    <property type="entry name" value="PDZ-like_dom"/>
</dbReference>
<dbReference type="InterPro" id="IPR041489">
    <property type="entry name" value="PDZ_6"/>
</dbReference>
<dbReference type="InterPro" id="IPR036034">
    <property type="entry name" value="PDZ_sf"/>
</dbReference>
<dbReference type="InterPro" id="IPR009003">
    <property type="entry name" value="Peptidase_S1_PA"/>
</dbReference>
<dbReference type="InterPro" id="IPR001940">
    <property type="entry name" value="Peptidase_S1C"/>
</dbReference>
<dbReference type="PANTHER" id="PTHR46366">
    <property type="entry name" value="PRO-APOPTOTIC SERINE PROTEASE NMA111"/>
    <property type="match status" value="1"/>
</dbReference>
<dbReference type="PANTHER" id="PTHR46366:SF8">
    <property type="entry name" value="PRO-APOPTOTIC SERINE PROTEASE NMA111"/>
    <property type="match status" value="1"/>
</dbReference>
<dbReference type="Pfam" id="PF12812">
    <property type="entry name" value="PDZ_1"/>
    <property type="match status" value="2"/>
</dbReference>
<dbReference type="Pfam" id="PF17820">
    <property type="entry name" value="PDZ_6"/>
    <property type="match status" value="1"/>
</dbReference>
<dbReference type="Pfam" id="PF13365">
    <property type="entry name" value="Trypsin_2"/>
    <property type="match status" value="1"/>
</dbReference>
<dbReference type="PRINTS" id="PR00834">
    <property type="entry name" value="PROTEASES2C"/>
</dbReference>
<dbReference type="SMART" id="SM00228">
    <property type="entry name" value="PDZ"/>
    <property type="match status" value="2"/>
</dbReference>
<dbReference type="SUPFAM" id="SSF50156">
    <property type="entry name" value="PDZ domain-like"/>
    <property type="match status" value="3"/>
</dbReference>
<dbReference type="SUPFAM" id="SSF50494">
    <property type="entry name" value="Trypsin-like serine proteases"/>
    <property type="match status" value="2"/>
</dbReference>
<name>NM111_AJECN</name>
<accession>A6RG85</accession>
<gene>
    <name type="primary">NMA111</name>
    <name type="ORF">HCAG_08651</name>
</gene>
<evidence type="ECO:0000250" key="1"/>
<evidence type="ECO:0000255" key="2"/>
<evidence type="ECO:0000256" key="3">
    <source>
        <dbReference type="SAM" id="MobiDB-lite"/>
    </source>
</evidence>
<evidence type="ECO:0000305" key="4"/>
<feature type="chain" id="PRO_0000320343" description="Pro-apoptotic serine protease NMA111">
    <location>
        <begin position="1"/>
        <end position="1028"/>
    </location>
</feature>
<feature type="domain" description="PDZ 1">
    <location>
        <begin position="292"/>
        <end position="377"/>
    </location>
</feature>
<feature type="domain" description="PDZ 2">
    <location>
        <begin position="878"/>
        <end position="959"/>
    </location>
</feature>
<feature type="region of interest" description="Disordered" evidence="3">
    <location>
        <begin position="1"/>
        <end position="39"/>
    </location>
</feature>
<feature type="region of interest" description="Serine protease">
    <location>
        <begin position="85"/>
        <end position="269"/>
    </location>
</feature>
<feature type="region of interest" description="Disordered" evidence="3">
    <location>
        <begin position="1003"/>
        <end position="1028"/>
    </location>
</feature>
<feature type="compositionally biased region" description="Basic residues" evidence="3">
    <location>
        <begin position="1"/>
        <end position="10"/>
    </location>
</feature>
<feature type="compositionally biased region" description="Acidic residues" evidence="3">
    <location>
        <begin position="1019"/>
        <end position="1028"/>
    </location>
</feature>
<feature type="active site" description="Charge relay system" evidence="2">
    <location>
        <position position="123"/>
    </location>
</feature>
<feature type="active site" description="Charge relay system" evidence="2">
    <location>
        <position position="154"/>
    </location>
</feature>
<feature type="active site" description="Charge relay system" evidence="2">
    <location>
        <position position="236"/>
    </location>
</feature>
<proteinExistence type="inferred from homology"/>
<reference key="1">
    <citation type="journal article" date="2009" name="Genome Res.">
        <title>Comparative genomic analyses of the human fungal pathogens Coccidioides and their relatives.</title>
        <authorList>
            <person name="Sharpton T.J."/>
            <person name="Stajich J.E."/>
            <person name="Rounsley S.D."/>
            <person name="Gardner M.J."/>
            <person name="Wortman J.R."/>
            <person name="Jordar V.S."/>
            <person name="Maiti R."/>
            <person name="Kodira C.D."/>
            <person name="Neafsey D.E."/>
            <person name="Zeng Q."/>
            <person name="Hung C.-Y."/>
            <person name="McMahan C."/>
            <person name="Muszewska A."/>
            <person name="Grynberg M."/>
            <person name="Mandel M.A."/>
            <person name="Kellner E.M."/>
            <person name="Barker B.M."/>
            <person name="Galgiani J.N."/>
            <person name="Orbach M.J."/>
            <person name="Kirkland T.N."/>
            <person name="Cole G.T."/>
            <person name="Henn M.R."/>
            <person name="Birren B.W."/>
            <person name="Taylor J.W."/>
        </authorList>
    </citation>
    <scope>NUCLEOTIDE SEQUENCE [LARGE SCALE GENOMIC DNA]</scope>
    <source>
        <strain>NAm1 / WU24</strain>
    </source>
</reference>
<comment type="function">
    <text evidence="1">Nuclear serine protease which mediates apoptosis.</text>
</comment>
<comment type="subcellular location">
    <subcellularLocation>
        <location evidence="1">Nucleus</location>
    </subcellularLocation>
</comment>
<comment type="similarity">
    <text evidence="4">Belongs to the peptidase S1C family.</text>
</comment>
<comment type="sequence caution" evidence="4">
    <conflict type="erroneous initiation">
        <sequence resource="EMBL-CDS" id="EDN04997"/>
    </conflict>
</comment>
<keyword id="KW-0053">Apoptosis</keyword>
<keyword id="KW-0378">Hydrolase</keyword>
<keyword id="KW-0539">Nucleus</keyword>
<keyword id="KW-0645">Protease</keyword>
<keyword id="KW-1185">Reference proteome</keyword>
<keyword id="KW-0677">Repeat</keyword>
<keyword id="KW-0720">Serine protease</keyword>